<proteinExistence type="inferred from homology"/>
<feature type="chain" id="PRO_0000327854" description="Superoxide dismutase [Cu-Zn] 5">
    <location>
        <begin position="1"/>
        <end position="152"/>
    </location>
</feature>
<feature type="binding site" evidence="1">
    <location>
        <position position="44"/>
    </location>
    <ligand>
        <name>Cu cation</name>
        <dbReference type="ChEBI" id="CHEBI:23378"/>
        <note>catalytic</note>
    </ligand>
</feature>
<feature type="binding site" evidence="1">
    <location>
        <position position="46"/>
    </location>
    <ligand>
        <name>Cu cation</name>
        <dbReference type="ChEBI" id="CHEBI:23378"/>
        <note>catalytic</note>
    </ligand>
</feature>
<feature type="binding site" evidence="1">
    <location>
        <position position="61"/>
    </location>
    <ligand>
        <name>Cu cation</name>
        <dbReference type="ChEBI" id="CHEBI:23378"/>
        <note>catalytic</note>
    </ligand>
</feature>
<feature type="binding site" evidence="1">
    <location>
        <position position="61"/>
    </location>
    <ligand>
        <name>Zn(2+)</name>
        <dbReference type="ChEBI" id="CHEBI:29105"/>
        <note>structural</note>
    </ligand>
</feature>
<feature type="binding site" evidence="1">
    <location>
        <position position="69"/>
    </location>
    <ligand>
        <name>Zn(2+)</name>
        <dbReference type="ChEBI" id="CHEBI:29105"/>
        <note>structural</note>
    </ligand>
</feature>
<feature type="binding site" evidence="1">
    <location>
        <position position="78"/>
    </location>
    <ligand>
        <name>Zn(2+)</name>
        <dbReference type="ChEBI" id="CHEBI:29105"/>
        <note>structural</note>
    </ligand>
</feature>
<feature type="binding site" evidence="1">
    <location>
        <position position="81"/>
    </location>
    <ligand>
        <name>Zn(2+)</name>
        <dbReference type="ChEBI" id="CHEBI:29105"/>
        <note>structural</note>
    </ligand>
</feature>
<feature type="binding site" evidence="1">
    <location>
        <position position="118"/>
    </location>
    <ligand>
        <name>Cu cation</name>
        <dbReference type="ChEBI" id="CHEBI:23378"/>
        <note>catalytic</note>
    </ligand>
</feature>
<feature type="disulfide bond" evidence="1">
    <location>
        <begin position="55"/>
        <end position="144"/>
    </location>
</feature>
<sequence length="152" mass="16148">MSAICVIKGDGVDGIINFKQNDNKSPVIISGVISGLKEGKHGFHVHEFGDTTNGCLSAGAHFNPFKKEHGSPNDENRHVGDLGNIESNKDKKSIINITDNIITLFGQNSIIGRSIVVHDKEDDLGRGNSQDSKITGNAGSRLGCGIIALSKI</sequence>
<organism>
    <name type="scientific">Dictyostelium discoideum</name>
    <name type="common">Social amoeba</name>
    <dbReference type="NCBI Taxonomy" id="44689"/>
    <lineage>
        <taxon>Eukaryota</taxon>
        <taxon>Amoebozoa</taxon>
        <taxon>Evosea</taxon>
        <taxon>Eumycetozoa</taxon>
        <taxon>Dictyostelia</taxon>
        <taxon>Dictyosteliales</taxon>
        <taxon>Dictyosteliaceae</taxon>
        <taxon>Dictyostelium</taxon>
    </lineage>
</organism>
<keyword id="KW-0049">Antioxidant</keyword>
<keyword id="KW-0186">Copper</keyword>
<keyword id="KW-1015">Disulfide bond</keyword>
<keyword id="KW-0479">Metal-binding</keyword>
<keyword id="KW-0560">Oxidoreductase</keyword>
<keyword id="KW-1185">Reference proteome</keyword>
<keyword id="KW-0862">Zinc</keyword>
<evidence type="ECO:0000250" key="1"/>
<evidence type="ECO:0000305" key="2"/>
<name>SODC5_DICDI</name>
<gene>
    <name type="primary">sodE</name>
    <name type="ORF">DDB_G0290343</name>
</gene>
<accession>Q54G70</accession>
<comment type="function">
    <text evidence="1">Destroys radicals which are normally produced within the cells and which are toxic to biological systems.</text>
</comment>
<comment type="catalytic activity">
    <reaction>
        <text>2 superoxide + 2 H(+) = H2O2 + O2</text>
        <dbReference type="Rhea" id="RHEA:20696"/>
        <dbReference type="ChEBI" id="CHEBI:15378"/>
        <dbReference type="ChEBI" id="CHEBI:15379"/>
        <dbReference type="ChEBI" id="CHEBI:16240"/>
        <dbReference type="ChEBI" id="CHEBI:18421"/>
        <dbReference type="EC" id="1.15.1.1"/>
    </reaction>
</comment>
<comment type="cofactor">
    <cofactor evidence="1">
        <name>Cu cation</name>
        <dbReference type="ChEBI" id="CHEBI:23378"/>
    </cofactor>
    <text evidence="1">Binds 1 copper ion per subunit.</text>
</comment>
<comment type="cofactor">
    <cofactor evidence="1">
        <name>Zn(2+)</name>
        <dbReference type="ChEBI" id="CHEBI:29105"/>
    </cofactor>
    <text evidence="1">Binds 1 zinc ion per subunit.</text>
</comment>
<comment type="similarity">
    <text evidence="2">Belongs to the Cu-Zn superoxide dismutase family.</text>
</comment>
<dbReference type="EC" id="1.15.1.1"/>
<dbReference type="EMBL" id="AAFI02000162">
    <property type="protein sequence ID" value="EAL62298.1"/>
    <property type="molecule type" value="Genomic_DNA"/>
</dbReference>
<dbReference type="RefSeq" id="XP_635813.1">
    <property type="nucleotide sequence ID" value="XM_630721.1"/>
</dbReference>
<dbReference type="SMR" id="Q54G70"/>
<dbReference type="FunCoup" id="Q54G70">
    <property type="interactions" value="357"/>
</dbReference>
<dbReference type="STRING" id="44689.Q54G70"/>
<dbReference type="PaxDb" id="44689-DDB0237961"/>
<dbReference type="EnsemblProtists" id="EAL62298">
    <property type="protein sequence ID" value="EAL62298"/>
    <property type="gene ID" value="DDB_G0290343"/>
</dbReference>
<dbReference type="GeneID" id="8627619"/>
<dbReference type="KEGG" id="ddi:DDB_G0290343"/>
<dbReference type="dictyBase" id="DDB_G0290343">
    <property type="gene designation" value="sodE"/>
</dbReference>
<dbReference type="VEuPathDB" id="AmoebaDB:DDB_G0290343"/>
<dbReference type="eggNOG" id="KOG0441">
    <property type="taxonomic scope" value="Eukaryota"/>
</dbReference>
<dbReference type="HOGENOM" id="CLU_056632_4_1_1"/>
<dbReference type="InParanoid" id="Q54G70"/>
<dbReference type="OMA" id="CGTIWIK"/>
<dbReference type="PhylomeDB" id="Q54G70"/>
<dbReference type="Reactome" id="R-DDI-114608">
    <property type="pathway name" value="Platelet degranulation"/>
</dbReference>
<dbReference type="Reactome" id="R-DDI-3299685">
    <property type="pathway name" value="Detoxification of Reactive Oxygen Species"/>
</dbReference>
<dbReference type="PRO" id="PR:Q54G70"/>
<dbReference type="Proteomes" id="UP000002195">
    <property type="component" value="Chromosome 5"/>
</dbReference>
<dbReference type="GO" id="GO:0005829">
    <property type="term" value="C:cytosol"/>
    <property type="evidence" value="ECO:0000250"/>
    <property type="project" value="dictyBase"/>
</dbReference>
<dbReference type="GO" id="GO:0005758">
    <property type="term" value="C:mitochondrial intermembrane space"/>
    <property type="evidence" value="ECO:0000250"/>
    <property type="project" value="dictyBase"/>
</dbReference>
<dbReference type="GO" id="GO:0005739">
    <property type="term" value="C:mitochondrion"/>
    <property type="evidence" value="ECO:0000250"/>
    <property type="project" value="dictyBase"/>
</dbReference>
<dbReference type="GO" id="GO:0005507">
    <property type="term" value="F:copper ion binding"/>
    <property type="evidence" value="ECO:0000318"/>
    <property type="project" value="GO_Central"/>
</dbReference>
<dbReference type="GO" id="GO:0004784">
    <property type="term" value="F:superoxide dismutase activity"/>
    <property type="evidence" value="ECO:0000250"/>
    <property type="project" value="dictyBase"/>
</dbReference>
<dbReference type="GO" id="GO:0019430">
    <property type="term" value="P:removal of superoxide radicals"/>
    <property type="evidence" value="ECO:0000318"/>
    <property type="project" value="GO_Central"/>
</dbReference>
<dbReference type="GO" id="GO:0006979">
    <property type="term" value="P:response to oxidative stress"/>
    <property type="evidence" value="ECO:0000250"/>
    <property type="project" value="dictyBase"/>
</dbReference>
<dbReference type="GO" id="GO:0042554">
    <property type="term" value="P:superoxide anion generation"/>
    <property type="evidence" value="ECO:0000250"/>
    <property type="project" value="dictyBase"/>
</dbReference>
<dbReference type="CDD" id="cd00305">
    <property type="entry name" value="Cu-Zn_Superoxide_Dismutase"/>
    <property type="match status" value="1"/>
</dbReference>
<dbReference type="FunFam" id="2.60.40.200:FF:000001">
    <property type="entry name" value="Superoxide dismutase [Cu-Zn]"/>
    <property type="match status" value="1"/>
</dbReference>
<dbReference type="Gene3D" id="2.60.40.200">
    <property type="entry name" value="Superoxide dismutase, copper/zinc binding domain"/>
    <property type="match status" value="1"/>
</dbReference>
<dbReference type="InterPro" id="IPR036423">
    <property type="entry name" value="SOD-like_Cu/Zn_dom_sf"/>
</dbReference>
<dbReference type="InterPro" id="IPR024134">
    <property type="entry name" value="SOD_Cu/Zn_/chaperone"/>
</dbReference>
<dbReference type="InterPro" id="IPR018152">
    <property type="entry name" value="SOD_Cu/Zn_BS"/>
</dbReference>
<dbReference type="InterPro" id="IPR001424">
    <property type="entry name" value="SOD_Cu_Zn_dom"/>
</dbReference>
<dbReference type="PANTHER" id="PTHR10003">
    <property type="entry name" value="SUPEROXIDE DISMUTASE CU-ZN -RELATED"/>
    <property type="match status" value="1"/>
</dbReference>
<dbReference type="Pfam" id="PF00080">
    <property type="entry name" value="Sod_Cu"/>
    <property type="match status" value="1"/>
</dbReference>
<dbReference type="PRINTS" id="PR00068">
    <property type="entry name" value="CUZNDISMTASE"/>
</dbReference>
<dbReference type="SUPFAM" id="SSF49329">
    <property type="entry name" value="Cu,Zn superoxide dismutase-like"/>
    <property type="match status" value="1"/>
</dbReference>
<dbReference type="PROSITE" id="PS00087">
    <property type="entry name" value="SOD_CU_ZN_1"/>
    <property type="match status" value="1"/>
</dbReference>
<dbReference type="PROSITE" id="PS00332">
    <property type="entry name" value="SOD_CU_ZN_2"/>
    <property type="match status" value="1"/>
</dbReference>
<reference key="1">
    <citation type="journal article" date="2005" name="Nature">
        <title>The genome of the social amoeba Dictyostelium discoideum.</title>
        <authorList>
            <person name="Eichinger L."/>
            <person name="Pachebat J.A."/>
            <person name="Gloeckner G."/>
            <person name="Rajandream M.A."/>
            <person name="Sucgang R."/>
            <person name="Berriman M."/>
            <person name="Song J."/>
            <person name="Olsen R."/>
            <person name="Szafranski K."/>
            <person name="Xu Q."/>
            <person name="Tunggal B."/>
            <person name="Kummerfeld S."/>
            <person name="Madera M."/>
            <person name="Konfortov B.A."/>
            <person name="Rivero F."/>
            <person name="Bankier A.T."/>
            <person name="Lehmann R."/>
            <person name="Hamlin N."/>
            <person name="Davies R."/>
            <person name="Gaudet P."/>
            <person name="Fey P."/>
            <person name="Pilcher K."/>
            <person name="Chen G."/>
            <person name="Saunders D."/>
            <person name="Sodergren E.J."/>
            <person name="Davis P."/>
            <person name="Kerhornou A."/>
            <person name="Nie X."/>
            <person name="Hall N."/>
            <person name="Anjard C."/>
            <person name="Hemphill L."/>
            <person name="Bason N."/>
            <person name="Farbrother P."/>
            <person name="Desany B."/>
            <person name="Just E."/>
            <person name="Morio T."/>
            <person name="Rost R."/>
            <person name="Churcher C.M."/>
            <person name="Cooper J."/>
            <person name="Haydock S."/>
            <person name="van Driessche N."/>
            <person name="Cronin A."/>
            <person name="Goodhead I."/>
            <person name="Muzny D.M."/>
            <person name="Mourier T."/>
            <person name="Pain A."/>
            <person name="Lu M."/>
            <person name="Harper D."/>
            <person name="Lindsay R."/>
            <person name="Hauser H."/>
            <person name="James K.D."/>
            <person name="Quiles M."/>
            <person name="Madan Babu M."/>
            <person name="Saito T."/>
            <person name="Buchrieser C."/>
            <person name="Wardroper A."/>
            <person name="Felder M."/>
            <person name="Thangavelu M."/>
            <person name="Johnson D."/>
            <person name="Knights A."/>
            <person name="Loulseged H."/>
            <person name="Mungall K.L."/>
            <person name="Oliver K."/>
            <person name="Price C."/>
            <person name="Quail M.A."/>
            <person name="Urushihara H."/>
            <person name="Hernandez J."/>
            <person name="Rabbinowitsch E."/>
            <person name="Steffen D."/>
            <person name="Sanders M."/>
            <person name="Ma J."/>
            <person name="Kohara Y."/>
            <person name="Sharp S."/>
            <person name="Simmonds M.N."/>
            <person name="Spiegler S."/>
            <person name="Tivey A."/>
            <person name="Sugano S."/>
            <person name="White B."/>
            <person name="Walker D."/>
            <person name="Woodward J.R."/>
            <person name="Winckler T."/>
            <person name="Tanaka Y."/>
            <person name="Shaulsky G."/>
            <person name="Schleicher M."/>
            <person name="Weinstock G.M."/>
            <person name="Rosenthal A."/>
            <person name="Cox E.C."/>
            <person name="Chisholm R.L."/>
            <person name="Gibbs R.A."/>
            <person name="Loomis W.F."/>
            <person name="Platzer M."/>
            <person name="Kay R.R."/>
            <person name="Williams J.G."/>
            <person name="Dear P.H."/>
            <person name="Noegel A.A."/>
            <person name="Barrell B.G."/>
            <person name="Kuspa A."/>
        </authorList>
    </citation>
    <scope>NUCLEOTIDE SEQUENCE [LARGE SCALE GENOMIC DNA]</scope>
    <source>
        <strain>AX4</strain>
    </source>
</reference>
<protein>
    <recommendedName>
        <fullName>Superoxide dismutase [Cu-Zn] 5</fullName>
        <ecNumber>1.15.1.1</ecNumber>
    </recommendedName>
</protein>